<accession>Q6F6R2</accession>
<feature type="chain" id="PRO_0000228318" description="4-hydroxy-tetrahydrodipicolinate reductase">
    <location>
        <begin position="1"/>
        <end position="273"/>
    </location>
</feature>
<feature type="active site" description="Proton donor/acceptor" evidence="1">
    <location>
        <position position="157"/>
    </location>
</feature>
<feature type="active site" description="Proton donor" evidence="1">
    <location>
        <position position="161"/>
    </location>
</feature>
<feature type="binding site" evidence="1">
    <location>
        <begin position="11"/>
        <end position="16"/>
    </location>
    <ligand>
        <name>NAD(+)</name>
        <dbReference type="ChEBI" id="CHEBI:57540"/>
    </ligand>
</feature>
<feature type="binding site" evidence="1">
    <location>
        <position position="36"/>
    </location>
    <ligand>
        <name>NAD(+)</name>
        <dbReference type="ChEBI" id="CHEBI:57540"/>
    </ligand>
</feature>
<feature type="binding site" evidence="1">
    <location>
        <position position="37"/>
    </location>
    <ligand>
        <name>NADP(+)</name>
        <dbReference type="ChEBI" id="CHEBI:58349"/>
    </ligand>
</feature>
<feature type="binding site" evidence="1">
    <location>
        <begin position="100"/>
        <end position="102"/>
    </location>
    <ligand>
        <name>NAD(+)</name>
        <dbReference type="ChEBI" id="CHEBI:57540"/>
    </ligand>
</feature>
<feature type="binding site" evidence="1">
    <location>
        <begin position="124"/>
        <end position="127"/>
    </location>
    <ligand>
        <name>NAD(+)</name>
        <dbReference type="ChEBI" id="CHEBI:57540"/>
    </ligand>
</feature>
<feature type="binding site" evidence="1">
    <location>
        <position position="158"/>
    </location>
    <ligand>
        <name>(S)-2,3,4,5-tetrahydrodipicolinate</name>
        <dbReference type="ChEBI" id="CHEBI:16845"/>
    </ligand>
</feature>
<feature type="binding site" evidence="1">
    <location>
        <begin position="167"/>
        <end position="168"/>
    </location>
    <ligand>
        <name>(S)-2,3,4,5-tetrahydrodipicolinate</name>
        <dbReference type="ChEBI" id="CHEBI:16845"/>
    </ligand>
</feature>
<gene>
    <name evidence="1" type="primary">dapB</name>
    <name type="ordered locus">ACIAD3619</name>
</gene>
<reference key="1">
    <citation type="journal article" date="2004" name="Nucleic Acids Res.">
        <title>Unique features revealed by the genome sequence of Acinetobacter sp. ADP1, a versatile and naturally transformation competent bacterium.</title>
        <authorList>
            <person name="Barbe V."/>
            <person name="Vallenet D."/>
            <person name="Fonknechten N."/>
            <person name="Kreimeyer A."/>
            <person name="Oztas S."/>
            <person name="Labarre L."/>
            <person name="Cruveiller S."/>
            <person name="Robert C."/>
            <person name="Duprat S."/>
            <person name="Wincker P."/>
            <person name="Ornston L.N."/>
            <person name="Weissenbach J."/>
            <person name="Marliere P."/>
            <person name="Cohen G.N."/>
            <person name="Medigue C."/>
        </authorList>
    </citation>
    <scope>NUCLEOTIDE SEQUENCE [LARGE SCALE GENOMIC DNA]</scope>
    <source>
        <strain>ATCC 33305 / BD413 / ADP1</strain>
    </source>
</reference>
<keyword id="KW-0028">Amino-acid biosynthesis</keyword>
<keyword id="KW-0963">Cytoplasm</keyword>
<keyword id="KW-0220">Diaminopimelate biosynthesis</keyword>
<keyword id="KW-0457">Lysine biosynthesis</keyword>
<keyword id="KW-0520">NAD</keyword>
<keyword id="KW-0521">NADP</keyword>
<keyword id="KW-0560">Oxidoreductase</keyword>
<evidence type="ECO:0000255" key="1">
    <source>
        <dbReference type="HAMAP-Rule" id="MF_00102"/>
    </source>
</evidence>
<evidence type="ECO:0000305" key="2"/>
<organism>
    <name type="scientific">Acinetobacter baylyi (strain ATCC 33305 / BD413 / ADP1)</name>
    <dbReference type="NCBI Taxonomy" id="62977"/>
    <lineage>
        <taxon>Bacteria</taxon>
        <taxon>Pseudomonadati</taxon>
        <taxon>Pseudomonadota</taxon>
        <taxon>Gammaproteobacteria</taxon>
        <taxon>Moraxellales</taxon>
        <taxon>Moraxellaceae</taxon>
        <taxon>Acinetobacter</taxon>
    </lineage>
</organism>
<proteinExistence type="inferred from homology"/>
<sequence length="273" mass="29004">MSASPRIGVLGAGGRMGRILIQAVQQAGYQLAAAVERPESSLVGSDAGELAGIGHIGVKISGSLVEVLKDCDVVIDFTAPVATEQHLKLCGDAGVAMVIGTTGFSEQQKQLLNETAHQTPVVYAANYSVGVNVTIKLLELASKVFGDSVDIEIIEAHHRHKVDAPSGTALMMGEAIAETLGRDLKQDAVYCREGHTGPRERQSIGFQTIRGGDIVGEHTAMFIGEGERVEITHKATNRMNFAAGAVRAAAWVVGREARKYDMKDVLGFNDIQV</sequence>
<dbReference type="EC" id="1.17.1.8" evidence="1"/>
<dbReference type="EMBL" id="CR543861">
    <property type="protein sequence ID" value="CAG70255.1"/>
    <property type="molecule type" value="Genomic_DNA"/>
</dbReference>
<dbReference type="RefSeq" id="WP_004923088.1">
    <property type="nucleotide sequence ID" value="NC_005966.1"/>
</dbReference>
<dbReference type="SMR" id="Q6F6R2"/>
<dbReference type="STRING" id="202950.GCA_001485005_01602"/>
<dbReference type="GeneID" id="45235784"/>
<dbReference type="KEGG" id="aci:ACIAD3619"/>
<dbReference type="eggNOG" id="COG0289">
    <property type="taxonomic scope" value="Bacteria"/>
</dbReference>
<dbReference type="HOGENOM" id="CLU_047479_2_1_6"/>
<dbReference type="OrthoDB" id="9790352at2"/>
<dbReference type="BioCyc" id="ASP62977:ACIAD_RS16370-MONOMER"/>
<dbReference type="UniPathway" id="UPA00034">
    <property type="reaction ID" value="UER00018"/>
</dbReference>
<dbReference type="Proteomes" id="UP000000430">
    <property type="component" value="Chromosome"/>
</dbReference>
<dbReference type="GO" id="GO:0005829">
    <property type="term" value="C:cytosol"/>
    <property type="evidence" value="ECO:0007669"/>
    <property type="project" value="TreeGrafter"/>
</dbReference>
<dbReference type="GO" id="GO:0008839">
    <property type="term" value="F:4-hydroxy-tetrahydrodipicolinate reductase"/>
    <property type="evidence" value="ECO:0007669"/>
    <property type="project" value="UniProtKB-EC"/>
</dbReference>
<dbReference type="GO" id="GO:0051287">
    <property type="term" value="F:NAD binding"/>
    <property type="evidence" value="ECO:0007669"/>
    <property type="project" value="UniProtKB-UniRule"/>
</dbReference>
<dbReference type="GO" id="GO:0050661">
    <property type="term" value="F:NADP binding"/>
    <property type="evidence" value="ECO:0007669"/>
    <property type="project" value="UniProtKB-UniRule"/>
</dbReference>
<dbReference type="GO" id="GO:0016726">
    <property type="term" value="F:oxidoreductase activity, acting on CH or CH2 groups, NAD or NADP as acceptor"/>
    <property type="evidence" value="ECO:0007669"/>
    <property type="project" value="UniProtKB-UniRule"/>
</dbReference>
<dbReference type="GO" id="GO:0019877">
    <property type="term" value="P:diaminopimelate biosynthetic process"/>
    <property type="evidence" value="ECO:0007669"/>
    <property type="project" value="UniProtKB-UniRule"/>
</dbReference>
<dbReference type="GO" id="GO:0009089">
    <property type="term" value="P:lysine biosynthetic process via diaminopimelate"/>
    <property type="evidence" value="ECO:0007669"/>
    <property type="project" value="UniProtKB-UniRule"/>
</dbReference>
<dbReference type="CDD" id="cd02274">
    <property type="entry name" value="DHDPR_N"/>
    <property type="match status" value="1"/>
</dbReference>
<dbReference type="FunFam" id="3.30.360.10:FF:000004">
    <property type="entry name" value="4-hydroxy-tetrahydrodipicolinate reductase"/>
    <property type="match status" value="1"/>
</dbReference>
<dbReference type="FunFam" id="3.40.50.720:FF:000048">
    <property type="entry name" value="4-hydroxy-tetrahydrodipicolinate reductase"/>
    <property type="match status" value="1"/>
</dbReference>
<dbReference type="Gene3D" id="3.30.360.10">
    <property type="entry name" value="Dihydrodipicolinate Reductase, domain 2"/>
    <property type="match status" value="1"/>
</dbReference>
<dbReference type="Gene3D" id="3.40.50.720">
    <property type="entry name" value="NAD(P)-binding Rossmann-like Domain"/>
    <property type="match status" value="1"/>
</dbReference>
<dbReference type="HAMAP" id="MF_00102">
    <property type="entry name" value="DapB"/>
    <property type="match status" value="1"/>
</dbReference>
<dbReference type="InterPro" id="IPR022663">
    <property type="entry name" value="DapB_C"/>
</dbReference>
<dbReference type="InterPro" id="IPR000846">
    <property type="entry name" value="DapB_N"/>
</dbReference>
<dbReference type="InterPro" id="IPR022664">
    <property type="entry name" value="DapB_N_CS"/>
</dbReference>
<dbReference type="InterPro" id="IPR023940">
    <property type="entry name" value="DHDPR_bac"/>
</dbReference>
<dbReference type="InterPro" id="IPR036291">
    <property type="entry name" value="NAD(P)-bd_dom_sf"/>
</dbReference>
<dbReference type="NCBIfam" id="TIGR00036">
    <property type="entry name" value="dapB"/>
    <property type="match status" value="1"/>
</dbReference>
<dbReference type="PANTHER" id="PTHR20836:SF0">
    <property type="entry name" value="4-HYDROXY-TETRAHYDRODIPICOLINATE REDUCTASE 1, CHLOROPLASTIC-RELATED"/>
    <property type="match status" value="1"/>
</dbReference>
<dbReference type="PANTHER" id="PTHR20836">
    <property type="entry name" value="DIHYDRODIPICOLINATE REDUCTASE"/>
    <property type="match status" value="1"/>
</dbReference>
<dbReference type="Pfam" id="PF05173">
    <property type="entry name" value="DapB_C"/>
    <property type="match status" value="1"/>
</dbReference>
<dbReference type="Pfam" id="PF01113">
    <property type="entry name" value="DapB_N"/>
    <property type="match status" value="1"/>
</dbReference>
<dbReference type="PIRSF" id="PIRSF000161">
    <property type="entry name" value="DHPR"/>
    <property type="match status" value="1"/>
</dbReference>
<dbReference type="SUPFAM" id="SSF55347">
    <property type="entry name" value="Glyceraldehyde-3-phosphate dehydrogenase-like, C-terminal domain"/>
    <property type="match status" value="1"/>
</dbReference>
<dbReference type="SUPFAM" id="SSF51735">
    <property type="entry name" value="NAD(P)-binding Rossmann-fold domains"/>
    <property type="match status" value="1"/>
</dbReference>
<dbReference type="PROSITE" id="PS01298">
    <property type="entry name" value="DAPB"/>
    <property type="match status" value="1"/>
</dbReference>
<comment type="function">
    <text evidence="1">Catalyzes the conversion of 4-hydroxy-tetrahydrodipicolinate (HTPA) to tetrahydrodipicolinate.</text>
</comment>
<comment type="catalytic activity">
    <reaction evidence="1">
        <text>(S)-2,3,4,5-tetrahydrodipicolinate + NAD(+) + H2O = (2S,4S)-4-hydroxy-2,3,4,5-tetrahydrodipicolinate + NADH + H(+)</text>
        <dbReference type="Rhea" id="RHEA:35323"/>
        <dbReference type="ChEBI" id="CHEBI:15377"/>
        <dbReference type="ChEBI" id="CHEBI:15378"/>
        <dbReference type="ChEBI" id="CHEBI:16845"/>
        <dbReference type="ChEBI" id="CHEBI:57540"/>
        <dbReference type="ChEBI" id="CHEBI:57945"/>
        <dbReference type="ChEBI" id="CHEBI:67139"/>
        <dbReference type="EC" id="1.17.1.8"/>
    </reaction>
</comment>
<comment type="catalytic activity">
    <reaction evidence="1">
        <text>(S)-2,3,4,5-tetrahydrodipicolinate + NADP(+) + H2O = (2S,4S)-4-hydroxy-2,3,4,5-tetrahydrodipicolinate + NADPH + H(+)</text>
        <dbReference type="Rhea" id="RHEA:35331"/>
        <dbReference type="ChEBI" id="CHEBI:15377"/>
        <dbReference type="ChEBI" id="CHEBI:15378"/>
        <dbReference type="ChEBI" id="CHEBI:16845"/>
        <dbReference type="ChEBI" id="CHEBI:57783"/>
        <dbReference type="ChEBI" id="CHEBI:58349"/>
        <dbReference type="ChEBI" id="CHEBI:67139"/>
        <dbReference type="EC" id="1.17.1.8"/>
    </reaction>
</comment>
<comment type="pathway">
    <text evidence="1">Amino-acid biosynthesis; L-lysine biosynthesis via DAP pathway; (S)-tetrahydrodipicolinate from L-aspartate: step 4/4.</text>
</comment>
<comment type="subcellular location">
    <subcellularLocation>
        <location evidence="1">Cytoplasm</location>
    </subcellularLocation>
</comment>
<comment type="similarity">
    <text evidence="1">Belongs to the DapB family.</text>
</comment>
<comment type="caution">
    <text evidence="2">Was originally thought to be a dihydrodipicolinate reductase (DHDPR), catalyzing the conversion of dihydrodipicolinate to tetrahydrodipicolinate. However, it was shown in E.coli that the substrate of the enzymatic reaction is not dihydrodipicolinate (DHDP) but in fact (2S,4S)-4-hydroxy-2,3,4,5-tetrahydrodipicolinic acid (HTPA), the product released by the DapA-catalyzed reaction.</text>
</comment>
<name>DAPB_ACIAD</name>
<protein>
    <recommendedName>
        <fullName evidence="1">4-hydroxy-tetrahydrodipicolinate reductase</fullName>
        <shortName evidence="1">HTPA reductase</shortName>
        <ecNumber evidence="1">1.17.1.8</ecNumber>
    </recommendedName>
</protein>